<accession>B7JYM8</accession>
<keyword id="KW-0004">4Fe-4S</keyword>
<keyword id="KW-0963">Cytoplasm</keyword>
<keyword id="KW-0408">Iron</keyword>
<keyword id="KW-0411">Iron-sulfur</keyword>
<keyword id="KW-0479">Metal-binding</keyword>
<keyword id="KW-0560">Oxidoreductase</keyword>
<keyword id="KW-1185">Reference proteome</keyword>
<evidence type="ECO:0000255" key="1">
    <source>
        <dbReference type="HAMAP-Rule" id="MF_00069"/>
    </source>
</evidence>
<proteinExistence type="inferred from homology"/>
<sequence length="545" mass="59966">MFCEQCEQTASGNGCHQWGACGKSPEVNAVQDLLVYCLRGLAPVVLKAKELGISTHQADVFTGEALFATMTNVNFDKKRFTKYIRDCITIREQLKAAINQPVAWTDICCYQPNFNESLVEQGQNVALTLISQATNNLDIFSLKLTVLYGIKGCASYNFHAQELGQEDEKVYSFIQEALASLDRNDLSLNDWVNLALKVGETNLKAMELLDAGHTSTYGHPTPTSVPLNPRLGKALLVSGHDIKQLAAILQQTANTGLTIYTHGELLPAHGYPILKQKYPHLYGHYGTAWQNQTKDFAKFPGAIIVTTNCLMPPHETYDEKLFTIGPVGYQGINYLASDETGTPDFTPAIEKALSMPGFTTEETPRNVMVGFAHDAVLKVADTVIEAVQQGKIRHFFLVGGCDGAKPGRTYYTEFVEKVPKDCIVLTLACGKFRFFDKQLGSIGTLPRLMDVGQCNDAYSAIKIALGLANAFNIEVNQLPLSMILSWYEQKAIAVLLTLLYLGIKDIRLGPTLPAFITPNLFKLLSETYNLQSITTPEKDLAACLA</sequence>
<gene>
    <name evidence="1" type="primary">hcp</name>
    <name type="ordered locus">PCC8801_0816</name>
</gene>
<feature type="chain" id="PRO_1000192555" description="Hydroxylamine reductase">
    <location>
        <begin position="1"/>
        <end position="545"/>
    </location>
</feature>
<feature type="binding site" evidence="1">
    <location>
        <position position="3"/>
    </location>
    <ligand>
        <name>[4Fe-4S] cluster</name>
        <dbReference type="ChEBI" id="CHEBI:49883"/>
    </ligand>
</feature>
<feature type="binding site" evidence="1">
    <location>
        <position position="6"/>
    </location>
    <ligand>
        <name>[4Fe-4S] cluster</name>
        <dbReference type="ChEBI" id="CHEBI:49883"/>
    </ligand>
</feature>
<feature type="binding site" evidence="1">
    <location>
        <position position="15"/>
    </location>
    <ligand>
        <name>[4Fe-4S] cluster</name>
        <dbReference type="ChEBI" id="CHEBI:49883"/>
    </ligand>
</feature>
<feature type="binding site" evidence="1">
    <location>
        <position position="21"/>
    </location>
    <ligand>
        <name>[4Fe-4S] cluster</name>
        <dbReference type="ChEBI" id="CHEBI:49883"/>
    </ligand>
</feature>
<feature type="binding site" evidence="1">
    <location>
        <position position="240"/>
    </location>
    <ligand>
        <name>hybrid [4Fe-2O-2S] cluster</name>
        <dbReference type="ChEBI" id="CHEBI:60519"/>
    </ligand>
</feature>
<feature type="binding site" evidence="1">
    <location>
        <position position="264"/>
    </location>
    <ligand>
        <name>hybrid [4Fe-2O-2S] cluster</name>
        <dbReference type="ChEBI" id="CHEBI:60519"/>
    </ligand>
</feature>
<feature type="binding site" evidence="1">
    <location>
        <position position="309"/>
    </location>
    <ligand>
        <name>hybrid [4Fe-2O-2S] cluster</name>
        <dbReference type="ChEBI" id="CHEBI:60519"/>
    </ligand>
</feature>
<feature type="binding site" description="via persulfide group" evidence="1">
    <location>
        <position position="401"/>
    </location>
    <ligand>
        <name>hybrid [4Fe-2O-2S] cluster</name>
        <dbReference type="ChEBI" id="CHEBI:60519"/>
    </ligand>
</feature>
<feature type="binding site" evidence="1">
    <location>
        <position position="429"/>
    </location>
    <ligand>
        <name>hybrid [4Fe-2O-2S] cluster</name>
        <dbReference type="ChEBI" id="CHEBI:60519"/>
    </ligand>
</feature>
<feature type="binding site" evidence="1">
    <location>
        <position position="454"/>
    </location>
    <ligand>
        <name>hybrid [4Fe-2O-2S] cluster</name>
        <dbReference type="ChEBI" id="CHEBI:60519"/>
    </ligand>
</feature>
<feature type="binding site" evidence="1">
    <location>
        <position position="488"/>
    </location>
    <ligand>
        <name>hybrid [4Fe-2O-2S] cluster</name>
        <dbReference type="ChEBI" id="CHEBI:60519"/>
    </ligand>
</feature>
<feature type="binding site" evidence="1">
    <location>
        <position position="490"/>
    </location>
    <ligand>
        <name>hybrid [4Fe-2O-2S] cluster</name>
        <dbReference type="ChEBI" id="CHEBI:60519"/>
    </ligand>
</feature>
<feature type="modified residue" description="Cysteine persulfide" evidence="1">
    <location>
        <position position="401"/>
    </location>
</feature>
<comment type="function">
    <text evidence="1">Catalyzes the reduction of hydroxylamine to form NH(3) and H(2)O.</text>
</comment>
<comment type="catalytic activity">
    <reaction evidence="1">
        <text>A + NH4(+) + H2O = hydroxylamine + AH2 + H(+)</text>
        <dbReference type="Rhea" id="RHEA:22052"/>
        <dbReference type="ChEBI" id="CHEBI:13193"/>
        <dbReference type="ChEBI" id="CHEBI:15377"/>
        <dbReference type="ChEBI" id="CHEBI:15378"/>
        <dbReference type="ChEBI" id="CHEBI:15429"/>
        <dbReference type="ChEBI" id="CHEBI:17499"/>
        <dbReference type="ChEBI" id="CHEBI:28938"/>
        <dbReference type="EC" id="1.7.99.1"/>
    </reaction>
</comment>
<comment type="cofactor">
    <cofactor evidence="1">
        <name>[4Fe-4S] cluster</name>
        <dbReference type="ChEBI" id="CHEBI:49883"/>
    </cofactor>
    <text evidence="1">Binds 1 [4Fe-4S] cluster.</text>
</comment>
<comment type="cofactor">
    <cofactor evidence="1">
        <name>hybrid [4Fe-2O-2S] cluster</name>
        <dbReference type="ChEBI" id="CHEBI:60519"/>
    </cofactor>
    <text evidence="1">Binds 1 hybrid [4Fe-2O-2S] cluster.</text>
</comment>
<comment type="subcellular location">
    <subcellularLocation>
        <location evidence="1">Cytoplasm</location>
    </subcellularLocation>
</comment>
<comment type="similarity">
    <text evidence="1">Belongs to the HCP family.</text>
</comment>
<dbReference type="EC" id="1.7.99.1" evidence="1"/>
<dbReference type="EMBL" id="CP001287">
    <property type="protein sequence ID" value="ACK64898.1"/>
    <property type="molecule type" value="Genomic_DNA"/>
</dbReference>
<dbReference type="RefSeq" id="WP_012594174.1">
    <property type="nucleotide sequence ID" value="NC_011726.1"/>
</dbReference>
<dbReference type="SMR" id="B7JYM8"/>
<dbReference type="STRING" id="41431.PCC8801_0816"/>
<dbReference type="KEGG" id="cyp:PCC8801_0816"/>
<dbReference type="eggNOG" id="COG1151">
    <property type="taxonomic scope" value="Bacteria"/>
</dbReference>
<dbReference type="HOGENOM" id="CLU_038344_2_0_3"/>
<dbReference type="OrthoDB" id="9761526at2"/>
<dbReference type="Proteomes" id="UP000008204">
    <property type="component" value="Chromosome"/>
</dbReference>
<dbReference type="GO" id="GO:0005737">
    <property type="term" value="C:cytoplasm"/>
    <property type="evidence" value="ECO:0007669"/>
    <property type="project" value="UniProtKB-SubCell"/>
</dbReference>
<dbReference type="GO" id="GO:0051539">
    <property type="term" value="F:4 iron, 4 sulfur cluster binding"/>
    <property type="evidence" value="ECO:0007669"/>
    <property type="project" value="UniProtKB-KW"/>
</dbReference>
<dbReference type="GO" id="GO:0050418">
    <property type="term" value="F:hydroxylamine reductase activity"/>
    <property type="evidence" value="ECO:0007669"/>
    <property type="project" value="UniProtKB-UniRule"/>
</dbReference>
<dbReference type="GO" id="GO:0046872">
    <property type="term" value="F:metal ion binding"/>
    <property type="evidence" value="ECO:0007669"/>
    <property type="project" value="UniProtKB-KW"/>
</dbReference>
<dbReference type="GO" id="GO:0004601">
    <property type="term" value="F:peroxidase activity"/>
    <property type="evidence" value="ECO:0007669"/>
    <property type="project" value="TreeGrafter"/>
</dbReference>
<dbReference type="GO" id="GO:0042542">
    <property type="term" value="P:response to hydrogen peroxide"/>
    <property type="evidence" value="ECO:0007669"/>
    <property type="project" value="TreeGrafter"/>
</dbReference>
<dbReference type="CDD" id="cd01914">
    <property type="entry name" value="HCP"/>
    <property type="match status" value="1"/>
</dbReference>
<dbReference type="FunFam" id="1.20.1270.20:FF:000001">
    <property type="entry name" value="Hydroxylamine reductase"/>
    <property type="match status" value="1"/>
</dbReference>
<dbReference type="FunFam" id="3.40.50.2030:FF:000001">
    <property type="entry name" value="Hydroxylamine reductase"/>
    <property type="match status" value="1"/>
</dbReference>
<dbReference type="Gene3D" id="1.20.1270.20">
    <property type="match status" value="2"/>
</dbReference>
<dbReference type="Gene3D" id="3.40.50.2030">
    <property type="match status" value="2"/>
</dbReference>
<dbReference type="HAMAP" id="MF_00069">
    <property type="entry name" value="Hydroxylam_reduct"/>
    <property type="match status" value="1"/>
</dbReference>
<dbReference type="InterPro" id="IPR004137">
    <property type="entry name" value="HCP/CODH"/>
</dbReference>
<dbReference type="InterPro" id="IPR010048">
    <property type="entry name" value="Hydroxylam_reduct"/>
</dbReference>
<dbReference type="InterPro" id="IPR016099">
    <property type="entry name" value="Prismane-like_a/b-sand"/>
</dbReference>
<dbReference type="InterPro" id="IPR011254">
    <property type="entry name" value="Prismane-like_sf"/>
</dbReference>
<dbReference type="InterPro" id="IPR016100">
    <property type="entry name" value="Prismane_a-bundle"/>
</dbReference>
<dbReference type="NCBIfam" id="TIGR01703">
    <property type="entry name" value="hybrid_clust"/>
    <property type="match status" value="1"/>
</dbReference>
<dbReference type="NCBIfam" id="NF003658">
    <property type="entry name" value="PRK05290.1"/>
    <property type="match status" value="1"/>
</dbReference>
<dbReference type="PANTHER" id="PTHR30109">
    <property type="entry name" value="HYDROXYLAMINE REDUCTASE"/>
    <property type="match status" value="1"/>
</dbReference>
<dbReference type="PANTHER" id="PTHR30109:SF0">
    <property type="entry name" value="HYDROXYLAMINE REDUCTASE"/>
    <property type="match status" value="1"/>
</dbReference>
<dbReference type="Pfam" id="PF03063">
    <property type="entry name" value="Prismane"/>
    <property type="match status" value="1"/>
</dbReference>
<dbReference type="PIRSF" id="PIRSF000076">
    <property type="entry name" value="HCP"/>
    <property type="match status" value="1"/>
</dbReference>
<dbReference type="SUPFAM" id="SSF56821">
    <property type="entry name" value="Prismane protein-like"/>
    <property type="match status" value="1"/>
</dbReference>
<reference key="1">
    <citation type="journal article" date="2011" name="MBio">
        <title>Novel metabolic attributes of the genus Cyanothece, comprising a group of unicellular nitrogen-fixing Cyanobacteria.</title>
        <authorList>
            <person name="Bandyopadhyay A."/>
            <person name="Elvitigala T."/>
            <person name="Welsh E."/>
            <person name="Stockel J."/>
            <person name="Liberton M."/>
            <person name="Min H."/>
            <person name="Sherman L.A."/>
            <person name="Pakrasi H.B."/>
        </authorList>
    </citation>
    <scope>NUCLEOTIDE SEQUENCE [LARGE SCALE GENOMIC DNA]</scope>
    <source>
        <strain>PCC 8801 / RF-1</strain>
    </source>
</reference>
<organism>
    <name type="scientific">Rippkaea orientalis (strain PCC 8801 / RF-1)</name>
    <name type="common">Cyanothece sp. (strain PCC 8801)</name>
    <dbReference type="NCBI Taxonomy" id="41431"/>
    <lineage>
        <taxon>Bacteria</taxon>
        <taxon>Bacillati</taxon>
        <taxon>Cyanobacteriota</taxon>
        <taxon>Cyanophyceae</taxon>
        <taxon>Oscillatoriophycideae</taxon>
        <taxon>Chroococcales</taxon>
        <taxon>Aphanothecaceae</taxon>
        <taxon>Rippkaea</taxon>
        <taxon>Rippkaea orientalis</taxon>
    </lineage>
</organism>
<name>HCP_RIPO1</name>
<protein>
    <recommendedName>
        <fullName evidence="1">Hydroxylamine reductase</fullName>
        <ecNumber evidence="1">1.7.99.1</ecNumber>
    </recommendedName>
    <alternativeName>
        <fullName evidence="1">Hybrid-cluster protein</fullName>
        <shortName evidence="1">HCP</shortName>
    </alternativeName>
    <alternativeName>
        <fullName evidence="1">Prismane protein</fullName>
    </alternativeName>
</protein>